<organism>
    <name type="scientific">Hamiltonella defensa subsp. Acyrthosiphon pisum (strain 5AT)</name>
    <dbReference type="NCBI Taxonomy" id="572265"/>
    <lineage>
        <taxon>Bacteria</taxon>
        <taxon>Pseudomonadati</taxon>
        <taxon>Pseudomonadota</taxon>
        <taxon>Gammaproteobacteria</taxon>
        <taxon>Enterobacterales</taxon>
        <taxon>Enterobacteriaceae</taxon>
        <taxon>aphid secondary symbionts</taxon>
        <taxon>Candidatus Hamiltonella</taxon>
    </lineage>
</organism>
<accession>C4K5S1</accession>
<evidence type="ECO:0000255" key="1">
    <source>
        <dbReference type="HAMAP-Rule" id="MF_00532"/>
    </source>
</evidence>
<evidence type="ECO:0000305" key="2"/>
<protein>
    <recommendedName>
        <fullName evidence="1">Small ribosomal subunit protein uS9</fullName>
    </recommendedName>
    <alternativeName>
        <fullName evidence="2">30S ribosomal protein S9</fullName>
    </alternativeName>
</protein>
<keyword id="KW-0687">Ribonucleoprotein</keyword>
<keyword id="KW-0689">Ribosomal protein</keyword>
<reference key="1">
    <citation type="journal article" date="2009" name="Proc. Natl. Acad. Sci. U.S.A.">
        <title>Hamiltonella defensa, genome evolution of protective bacterial endosymbiont from pathogenic ancestors.</title>
        <authorList>
            <person name="Degnan P.H."/>
            <person name="Yu Y."/>
            <person name="Sisneros N."/>
            <person name="Wing R.A."/>
            <person name="Moran N.A."/>
        </authorList>
    </citation>
    <scope>NUCLEOTIDE SEQUENCE [LARGE SCALE GENOMIC DNA]</scope>
    <source>
        <strain>5AT</strain>
    </source>
</reference>
<gene>
    <name evidence="1" type="primary">rpsI</name>
    <name type="ordered locus">HDEF_1260</name>
</gene>
<name>RS9_HAMD5</name>
<proteinExistence type="inferred from homology"/>
<comment type="similarity">
    <text evidence="1">Belongs to the universal ribosomal protein uS9 family.</text>
</comment>
<sequence length="130" mass="14804">MAENQHYGTGRRKSSAARVFIKPGSGNIVVNQRSLEVYFGRETARMVVYQPLELLNMMNKFDLYITVKGGGISGQAGAIRHGITRALMAYDESLRPELRKAGFVTRDAREVERKKVGFRKARRRPQFSKR</sequence>
<feature type="chain" id="PRO_1000211837" description="Small ribosomal subunit protein uS9">
    <location>
        <begin position="1"/>
        <end position="130"/>
    </location>
</feature>
<dbReference type="EMBL" id="CP001277">
    <property type="protein sequence ID" value="ACQ67914.1"/>
    <property type="molecule type" value="Genomic_DNA"/>
</dbReference>
<dbReference type="RefSeq" id="WP_015873705.1">
    <property type="nucleotide sequence ID" value="NC_012751.1"/>
</dbReference>
<dbReference type="SMR" id="C4K5S1"/>
<dbReference type="STRING" id="572265.HDEF_1260"/>
<dbReference type="GeneID" id="66260959"/>
<dbReference type="KEGG" id="hde:HDEF_1260"/>
<dbReference type="eggNOG" id="COG0103">
    <property type="taxonomic scope" value="Bacteria"/>
</dbReference>
<dbReference type="HOGENOM" id="CLU_046483_2_1_6"/>
<dbReference type="Proteomes" id="UP000002334">
    <property type="component" value="Chromosome"/>
</dbReference>
<dbReference type="GO" id="GO:0022627">
    <property type="term" value="C:cytosolic small ribosomal subunit"/>
    <property type="evidence" value="ECO:0007669"/>
    <property type="project" value="TreeGrafter"/>
</dbReference>
<dbReference type="GO" id="GO:0003723">
    <property type="term" value="F:RNA binding"/>
    <property type="evidence" value="ECO:0007669"/>
    <property type="project" value="TreeGrafter"/>
</dbReference>
<dbReference type="GO" id="GO:0003735">
    <property type="term" value="F:structural constituent of ribosome"/>
    <property type="evidence" value="ECO:0007669"/>
    <property type="project" value="InterPro"/>
</dbReference>
<dbReference type="GO" id="GO:0006412">
    <property type="term" value="P:translation"/>
    <property type="evidence" value="ECO:0007669"/>
    <property type="project" value="UniProtKB-UniRule"/>
</dbReference>
<dbReference type="FunFam" id="3.30.230.10:FF:000001">
    <property type="entry name" value="30S ribosomal protein S9"/>
    <property type="match status" value="1"/>
</dbReference>
<dbReference type="Gene3D" id="3.30.230.10">
    <property type="match status" value="1"/>
</dbReference>
<dbReference type="HAMAP" id="MF_00532_B">
    <property type="entry name" value="Ribosomal_uS9_B"/>
    <property type="match status" value="1"/>
</dbReference>
<dbReference type="InterPro" id="IPR020568">
    <property type="entry name" value="Ribosomal_Su5_D2-typ_SF"/>
</dbReference>
<dbReference type="InterPro" id="IPR000754">
    <property type="entry name" value="Ribosomal_uS9"/>
</dbReference>
<dbReference type="InterPro" id="IPR023035">
    <property type="entry name" value="Ribosomal_uS9_bac/plastid"/>
</dbReference>
<dbReference type="InterPro" id="IPR020574">
    <property type="entry name" value="Ribosomal_uS9_CS"/>
</dbReference>
<dbReference type="InterPro" id="IPR014721">
    <property type="entry name" value="Ribsml_uS5_D2-typ_fold_subgr"/>
</dbReference>
<dbReference type="NCBIfam" id="NF001099">
    <property type="entry name" value="PRK00132.1"/>
    <property type="match status" value="1"/>
</dbReference>
<dbReference type="PANTHER" id="PTHR21569">
    <property type="entry name" value="RIBOSOMAL PROTEIN S9"/>
    <property type="match status" value="1"/>
</dbReference>
<dbReference type="PANTHER" id="PTHR21569:SF1">
    <property type="entry name" value="SMALL RIBOSOMAL SUBUNIT PROTEIN US9M"/>
    <property type="match status" value="1"/>
</dbReference>
<dbReference type="Pfam" id="PF00380">
    <property type="entry name" value="Ribosomal_S9"/>
    <property type="match status" value="1"/>
</dbReference>
<dbReference type="SUPFAM" id="SSF54211">
    <property type="entry name" value="Ribosomal protein S5 domain 2-like"/>
    <property type="match status" value="1"/>
</dbReference>
<dbReference type="PROSITE" id="PS00360">
    <property type="entry name" value="RIBOSOMAL_S9"/>
    <property type="match status" value="1"/>
</dbReference>